<name>RS5_CUPNH</name>
<gene>
    <name evidence="1" type="primary">rpsE</name>
    <name type="ordered locus">H16_A3467</name>
</gene>
<protein>
    <recommendedName>
        <fullName evidence="1">Small ribosomal subunit protein uS5</fullName>
    </recommendedName>
    <alternativeName>
        <fullName evidence="2">30S ribosomal protein S5</fullName>
    </alternativeName>
</protein>
<sequence length="172" mass="18239">MAKMQAKVQQDERDDGLREKMISVNRVTKVVKGGRILGFAALTVVGDGDGRIGMGKGKAKEVPVAVQKAMDEARRKMVKVSLKNGTLQHEVVGKHGAAKVLMMPAKEGTGVIAGGPMRAIFEVMGVTNVVTKSHGSTNPYNMVRATLDGLQKMSTPGEIAAKRGKSVEDILG</sequence>
<accession>Q0K636</accession>
<reference key="1">
    <citation type="journal article" date="2006" name="Nat. Biotechnol.">
        <title>Genome sequence of the bioplastic-producing 'Knallgas' bacterium Ralstonia eutropha H16.</title>
        <authorList>
            <person name="Pohlmann A."/>
            <person name="Fricke W.F."/>
            <person name="Reinecke F."/>
            <person name="Kusian B."/>
            <person name="Liesegang H."/>
            <person name="Cramm R."/>
            <person name="Eitinger T."/>
            <person name="Ewering C."/>
            <person name="Poetter M."/>
            <person name="Schwartz E."/>
            <person name="Strittmatter A."/>
            <person name="Voss I."/>
            <person name="Gottschalk G."/>
            <person name="Steinbuechel A."/>
            <person name="Friedrich B."/>
            <person name="Bowien B."/>
        </authorList>
    </citation>
    <scope>NUCLEOTIDE SEQUENCE [LARGE SCALE GENOMIC DNA]</scope>
    <source>
        <strain>ATCC 17699 / DSM 428 / KCTC 22496 / NCIMB 10442 / H16 / Stanier 337</strain>
    </source>
</reference>
<keyword id="KW-1185">Reference proteome</keyword>
<keyword id="KW-0687">Ribonucleoprotein</keyword>
<keyword id="KW-0689">Ribosomal protein</keyword>
<keyword id="KW-0694">RNA-binding</keyword>
<keyword id="KW-0699">rRNA-binding</keyword>
<proteinExistence type="inferred from homology"/>
<evidence type="ECO:0000255" key="1">
    <source>
        <dbReference type="HAMAP-Rule" id="MF_01307"/>
    </source>
</evidence>
<evidence type="ECO:0000305" key="2"/>
<dbReference type="EMBL" id="AM260479">
    <property type="protein sequence ID" value="CAJ94535.1"/>
    <property type="molecule type" value="Genomic_DNA"/>
</dbReference>
<dbReference type="RefSeq" id="WP_006160449.1">
    <property type="nucleotide sequence ID" value="NZ_CP039287.1"/>
</dbReference>
<dbReference type="SMR" id="Q0K636"/>
<dbReference type="STRING" id="381666.H16_A3467"/>
<dbReference type="GeneID" id="98402994"/>
<dbReference type="KEGG" id="reh:H16_A3467"/>
<dbReference type="eggNOG" id="COG0098">
    <property type="taxonomic scope" value="Bacteria"/>
</dbReference>
<dbReference type="HOGENOM" id="CLU_065898_2_2_4"/>
<dbReference type="OrthoDB" id="9809045at2"/>
<dbReference type="Proteomes" id="UP000008210">
    <property type="component" value="Chromosome 1"/>
</dbReference>
<dbReference type="GO" id="GO:0015935">
    <property type="term" value="C:small ribosomal subunit"/>
    <property type="evidence" value="ECO:0007669"/>
    <property type="project" value="InterPro"/>
</dbReference>
<dbReference type="GO" id="GO:0019843">
    <property type="term" value="F:rRNA binding"/>
    <property type="evidence" value="ECO:0007669"/>
    <property type="project" value="UniProtKB-UniRule"/>
</dbReference>
<dbReference type="GO" id="GO:0003735">
    <property type="term" value="F:structural constituent of ribosome"/>
    <property type="evidence" value="ECO:0007669"/>
    <property type="project" value="InterPro"/>
</dbReference>
<dbReference type="GO" id="GO:0006412">
    <property type="term" value="P:translation"/>
    <property type="evidence" value="ECO:0007669"/>
    <property type="project" value="UniProtKB-UniRule"/>
</dbReference>
<dbReference type="FunFam" id="3.30.160.20:FF:000001">
    <property type="entry name" value="30S ribosomal protein S5"/>
    <property type="match status" value="1"/>
</dbReference>
<dbReference type="FunFam" id="3.30.230.10:FF:000002">
    <property type="entry name" value="30S ribosomal protein S5"/>
    <property type="match status" value="1"/>
</dbReference>
<dbReference type="Gene3D" id="3.30.160.20">
    <property type="match status" value="1"/>
</dbReference>
<dbReference type="Gene3D" id="3.30.230.10">
    <property type="match status" value="1"/>
</dbReference>
<dbReference type="HAMAP" id="MF_01307_B">
    <property type="entry name" value="Ribosomal_uS5_B"/>
    <property type="match status" value="1"/>
</dbReference>
<dbReference type="InterPro" id="IPR020568">
    <property type="entry name" value="Ribosomal_Su5_D2-typ_SF"/>
</dbReference>
<dbReference type="InterPro" id="IPR000851">
    <property type="entry name" value="Ribosomal_uS5"/>
</dbReference>
<dbReference type="InterPro" id="IPR005712">
    <property type="entry name" value="Ribosomal_uS5_bac-type"/>
</dbReference>
<dbReference type="InterPro" id="IPR005324">
    <property type="entry name" value="Ribosomal_uS5_C"/>
</dbReference>
<dbReference type="InterPro" id="IPR013810">
    <property type="entry name" value="Ribosomal_uS5_N"/>
</dbReference>
<dbReference type="InterPro" id="IPR018192">
    <property type="entry name" value="Ribosomal_uS5_N_CS"/>
</dbReference>
<dbReference type="InterPro" id="IPR014721">
    <property type="entry name" value="Ribsml_uS5_D2-typ_fold_subgr"/>
</dbReference>
<dbReference type="NCBIfam" id="TIGR01021">
    <property type="entry name" value="rpsE_bact"/>
    <property type="match status" value="1"/>
</dbReference>
<dbReference type="PANTHER" id="PTHR48277">
    <property type="entry name" value="MITOCHONDRIAL RIBOSOMAL PROTEIN S5"/>
    <property type="match status" value="1"/>
</dbReference>
<dbReference type="PANTHER" id="PTHR48277:SF1">
    <property type="entry name" value="MITOCHONDRIAL RIBOSOMAL PROTEIN S5"/>
    <property type="match status" value="1"/>
</dbReference>
<dbReference type="Pfam" id="PF00333">
    <property type="entry name" value="Ribosomal_S5"/>
    <property type="match status" value="1"/>
</dbReference>
<dbReference type="Pfam" id="PF03719">
    <property type="entry name" value="Ribosomal_S5_C"/>
    <property type="match status" value="1"/>
</dbReference>
<dbReference type="SUPFAM" id="SSF54768">
    <property type="entry name" value="dsRNA-binding domain-like"/>
    <property type="match status" value="1"/>
</dbReference>
<dbReference type="SUPFAM" id="SSF54211">
    <property type="entry name" value="Ribosomal protein S5 domain 2-like"/>
    <property type="match status" value="1"/>
</dbReference>
<dbReference type="PROSITE" id="PS00585">
    <property type="entry name" value="RIBOSOMAL_S5"/>
    <property type="match status" value="1"/>
</dbReference>
<dbReference type="PROSITE" id="PS50881">
    <property type="entry name" value="S5_DSRBD"/>
    <property type="match status" value="1"/>
</dbReference>
<feature type="chain" id="PRO_0000323178" description="Small ribosomal subunit protein uS5">
    <location>
        <begin position="1"/>
        <end position="172"/>
    </location>
</feature>
<feature type="domain" description="S5 DRBM" evidence="1">
    <location>
        <begin position="17"/>
        <end position="80"/>
    </location>
</feature>
<comment type="function">
    <text evidence="1">With S4 and S12 plays an important role in translational accuracy.</text>
</comment>
<comment type="function">
    <text evidence="1">Located at the back of the 30S subunit body where it stabilizes the conformation of the head with respect to the body.</text>
</comment>
<comment type="subunit">
    <text evidence="1">Part of the 30S ribosomal subunit. Contacts proteins S4 and S8.</text>
</comment>
<comment type="domain">
    <text>The N-terminal domain interacts with the head of the 30S subunit; the C-terminal domain interacts with the body and contacts protein S4. The interaction surface between S4 and S5 is involved in control of translational fidelity.</text>
</comment>
<comment type="similarity">
    <text evidence="1">Belongs to the universal ribosomal protein uS5 family.</text>
</comment>
<organism>
    <name type="scientific">Cupriavidus necator (strain ATCC 17699 / DSM 428 / KCTC 22496 / NCIMB 10442 / H16 / Stanier 337)</name>
    <name type="common">Ralstonia eutropha</name>
    <dbReference type="NCBI Taxonomy" id="381666"/>
    <lineage>
        <taxon>Bacteria</taxon>
        <taxon>Pseudomonadati</taxon>
        <taxon>Pseudomonadota</taxon>
        <taxon>Betaproteobacteria</taxon>
        <taxon>Burkholderiales</taxon>
        <taxon>Burkholderiaceae</taxon>
        <taxon>Cupriavidus</taxon>
    </lineage>
</organism>